<keyword id="KW-0002">3D-structure</keyword>
<keyword id="KW-0963">Cytoplasm</keyword>
<keyword id="KW-0903">Direct protein sequencing</keyword>
<keyword id="KW-0249">Electron transport</keyword>
<keyword id="KW-0285">Flavoprotein</keyword>
<keyword id="KW-0288">FMN</keyword>
<keyword id="KW-0408">Iron</keyword>
<keyword id="KW-0479">Metal-binding</keyword>
<keyword id="KW-0560">Oxidoreductase</keyword>
<keyword id="KW-1185">Reference proteome</keyword>
<keyword id="KW-0813">Transport</keyword>
<protein>
    <recommendedName>
        <fullName>Anaerobic nitric oxide reductase flavorubredoxin</fullName>
        <shortName>FlRd</shortName>
        <shortName>FlavoRb</shortName>
    </recommendedName>
</protein>
<evidence type="ECO:0000250" key="1"/>
<evidence type="ECO:0000269" key="2">
    <source>
    </source>
</evidence>
<evidence type="ECO:0000305" key="3"/>
<evidence type="ECO:0007829" key="4">
    <source>
        <dbReference type="PDB" id="2MS3"/>
    </source>
</evidence>
<evidence type="ECO:0007829" key="5">
    <source>
        <dbReference type="PDB" id="4D02"/>
    </source>
</evidence>
<evidence type="ECO:0007829" key="6">
    <source>
        <dbReference type="PDB" id="7R2O"/>
    </source>
</evidence>
<name>NORV_ECOLI</name>
<dbReference type="EMBL" id="D28595">
    <property type="protein sequence ID" value="BAA05932.1"/>
    <property type="status" value="ALT_FRAME"/>
    <property type="molecule type" value="Genomic_DNA"/>
</dbReference>
<dbReference type="EMBL" id="D28595">
    <property type="protein sequence ID" value="BAA05933.1"/>
    <property type="status" value="ALT_FRAME"/>
    <property type="molecule type" value="Genomic_DNA"/>
</dbReference>
<dbReference type="EMBL" id="U29579">
    <property type="protein sequence ID" value="AAA69220.1"/>
    <property type="molecule type" value="Genomic_DNA"/>
</dbReference>
<dbReference type="EMBL" id="U00096">
    <property type="protein sequence ID" value="AAC75752.1"/>
    <property type="molecule type" value="Genomic_DNA"/>
</dbReference>
<dbReference type="EMBL" id="AP009048">
    <property type="protein sequence ID" value="BAE76787.1"/>
    <property type="molecule type" value="Genomic_DNA"/>
</dbReference>
<dbReference type="PIR" id="B65051">
    <property type="entry name" value="B65051"/>
</dbReference>
<dbReference type="RefSeq" id="NP_417190.1">
    <property type="nucleotide sequence ID" value="NC_000913.3"/>
</dbReference>
<dbReference type="RefSeq" id="WP_000029634.1">
    <property type="nucleotide sequence ID" value="NZ_STEB01000027.1"/>
</dbReference>
<dbReference type="PDB" id="2MS3">
    <property type="method" value="NMR"/>
    <property type="chains" value="A=423-479"/>
</dbReference>
<dbReference type="PDB" id="4D02">
    <property type="method" value="X-ray"/>
    <property type="resolution" value="1.76 A"/>
    <property type="chains" value="A=1-479"/>
</dbReference>
<dbReference type="PDB" id="5LLD">
    <property type="method" value="X-ray"/>
    <property type="resolution" value="2.65 A"/>
    <property type="chains" value="A=1-479"/>
</dbReference>
<dbReference type="PDB" id="5LMC">
    <property type="method" value="X-ray"/>
    <property type="resolution" value="1.90 A"/>
    <property type="chains" value="A=1-479"/>
</dbReference>
<dbReference type="PDB" id="6ETB">
    <property type="method" value="X-ray"/>
    <property type="resolution" value="1.91 A"/>
    <property type="chains" value="A/B=1-412"/>
</dbReference>
<dbReference type="PDB" id="7R0F">
    <property type="method" value="X-ray"/>
    <property type="resolution" value="1.98 A"/>
    <property type="chains" value="A/B=1-479"/>
</dbReference>
<dbReference type="PDB" id="7R1H">
    <property type="method" value="X-ray"/>
    <property type="resolution" value="1.96 A"/>
    <property type="chains" value="A/B=1-479"/>
</dbReference>
<dbReference type="PDB" id="7R1J">
    <property type="method" value="X-ray"/>
    <property type="resolution" value="1.90 A"/>
    <property type="chains" value="A/B=1-479"/>
</dbReference>
<dbReference type="PDB" id="7R2O">
    <property type="method" value="X-ray"/>
    <property type="resolution" value="1.85 A"/>
    <property type="chains" value="A/B=1-479"/>
</dbReference>
<dbReference type="PDB" id="7R2P">
    <property type="method" value="X-ray"/>
    <property type="resolution" value="2.54 A"/>
    <property type="chains" value="A/B=1-479"/>
</dbReference>
<dbReference type="PDB" id="7R2R">
    <property type="method" value="X-ray"/>
    <property type="resolution" value="2.20 A"/>
    <property type="chains" value="A/B=1-479"/>
</dbReference>
<dbReference type="PDB" id="7R2S">
    <property type="method" value="X-ray"/>
    <property type="resolution" value="2.19 A"/>
    <property type="chains" value="A/B=1-479"/>
</dbReference>
<dbReference type="PDBsum" id="2MS3"/>
<dbReference type="PDBsum" id="4D02"/>
<dbReference type="PDBsum" id="5LLD"/>
<dbReference type="PDBsum" id="5LMC"/>
<dbReference type="PDBsum" id="6ETB"/>
<dbReference type="PDBsum" id="7R0F"/>
<dbReference type="PDBsum" id="7R1H"/>
<dbReference type="PDBsum" id="7R1J"/>
<dbReference type="PDBsum" id="7R2O"/>
<dbReference type="PDBsum" id="7R2P"/>
<dbReference type="PDBsum" id="7R2R"/>
<dbReference type="PDBsum" id="7R2S"/>
<dbReference type="SASBDB" id="Q46877"/>
<dbReference type="SMR" id="Q46877"/>
<dbReference type="BioGRID" id="4261822">
    <property type="interactions" value="8"/>
</dbReference>
<dbReference type="DIP" id="DIP-28070N"/>
<dbReference type="FunCoup" id="Q46877">
    <property type="interactions" value="227"/>
</dbReference>
<dbReference type="IntAct" id="Q46877">
    <property type="interactions" value="10"/>
</dbReference>
<dbReference type="STRING" id="511145.b2710"/>
<dbReference type="PaxDb" id="511145-b2710"/>
<dbReference type="EnsemblBacteria" id="AAC75752">
    <property type="protein sequence ID" value="AAC75752"/>
    <property type="gene ID" value="b2710"/>
</dbReference>
<dbReference type="GeneID" id="948979"/>
<dbReference type="KEGG" id="ecj:JW2680"/>
<dbReference type="KEGG" id="eco:b2710"/>
<dbReference type="KEGG" id="ecoc:C3026_14915"/>
<dbReference type="PATRIC" id="fig|1411691.4.peg.4032"/>
<dbReference type="EchoBASE" id="EB2793"/>
<dbReference type="eggNOG" id="COG0426">
    <property type="taxonomic scope" value="Bacteria"/>
</dbReference>
<dbReference type="eggNOG" id="COG1773">
    <property type="taxonomic scope" value="Bacteria"/>
</dbReference>
<dbReference type="HOGENOM" id="CLU_017490_0_1_6"/>
<dbReference type="InParanoid" id="Q46877"/>
<dbReference type="OMA" id="PNTPIYC"/>
<dbReference type="OrthoDB" id="9800607at2"/>
<dbReference type="PhylomeDB" id="Q46877"/>
<dbReference type="BioCyc" id="EcoCyc:G7413-MONOMER"/>
<dbReference type="BioCyc" id="MetaCyc:G7413-MONOMER"/>
<dbReference type="UniPathway" id="UPA00638"/>
<dbReference type="EvolutionaryTrace" id="Q46877"/>
<dbReference type="PHI-base" id="PHI:12042"/>
<dbReference type="PRO" id="PR:Q46877"/>
<dbReference type="Proteomes" id="UP000000625">
    <property type="component" value="Chromosome"/>
</dbReference>
<dbReference type="GO" id="GO:0005737">
    <property type="term" value="C:cytoplasm"/>
    <property type="evidence" value="ECO:0007669"/>
    <property type="project" value="UniProtKB-SubCell"/>
</dbReference>
<dbReference type="GO" id="GO:0032991">
    <property type="term" value="C:protein-containing complex"/>
    <property type="evidence" value="ECO:0000314"/>
    <property type="project" value="EcoCyc"/>
</dbReference>
<dbReference type="GO" id="GO:0009055">
    <property type="term" value="F:electron transfer activity"/>
    <property type="evidence" value="ECO:0000314"/>
    <property type="project" value="EcoCyc"/>
</dbReference>
<dbReference type="GO" id="GO:0010181">
    <property type="term" value="F:FMN binding"/>
    <property type="evidence" value="ECO:0000314"/>
    <property type="project" value="EcoCyc"/>
</dbReference>
<dbReference type="GO" id="GO:0042802">
    <property type="term" value="F:identical protein binding"/>
    <property type="evidence" value="ECO:0000314"/>
    <property type="project" value="EcoCyc"/>
</dbReference>
<dbReference type="GO" id="GO:0005506">
    <property type="term" value="F:iron ion binding"/>
    <property type="evidence" value="ECO:0000314"/>
    <property type="project" value="EcoCyc"/>
</dbReference>
<dbReference type="GO" id="GO:0016966">
    <property type="term" value="F:nitric oxide reductase activity"/>
    <property type="evidence" value="ECO:0000314"/>
    <property type="project" value="EcoCyc"/>
</dbReference>
<dbReference type="GO" id="GO:0016491">
    <property type="term" value="F:oxidoreductase activity"/>
    <property type="evidence" value="ECO:0000318"/>
    <property type="project" value="GO_Central"/>
</dbReference>
<dbReference type="GO" id="GO:0016661">
    <property type="term" value="F:oxidoreductase activity, acting on other nitrogenous compounds as donors"/>
    <property type="evidence" value="ECO:0000314"/>
    <property type="project" value="EcoCyc"/>
</dbReference>
<dbReference type="GO" id="GO:0046210">
    <property type="term" value="P:nitric oxide catabolic process"/>
    <property type="evidence" value="ECO:0000315"/>
    <property type="project" value="EcoCyc"/>
</dbReference>
<dbReference type="GO" id="GO:0071731">
    <property type="term" value="P:response to nitric oxide"/>
    <property type="evidence" value="ECO:0000270"/>
    <property type="project" value="EcoCyc"/>
</dbReference>
<dbReference type="CDD" id="cd07709">
    <property type="entry name" value="flavodiiron_proteins_MBL-fold"/>
    <property type="match status" value="1"/>
</dbReference>
<dbReference type="CDD" id="cd00730">
    <property type="entry name" value="rubredoxin"/>
    <property type="match status" value="1"/>
</dbReference>
<dbReference type="FunFam" id="2.20.28.10:FF:000010">
    <property type="entry name" value="Anaerobic nitric oxide reductase flavorubredoxin"/>
    <property type="match status" value="1"/>
</dbReference>
<dbReference type="FunFam" id="3.40.50.360:FF:000012">
    <property type="entry name" value="Anaerobic nitric oxide reductase flavorubredoxin"/>
    <property type="match status" value="1"/>
</dbReference>
<dbReference type="FunFam" id="3.60.15.10:FF:000009">
    <property type="entry name" value="Anaerobic nitric oxide reductase flavorubredoxin"/>
    <property type="match status" value="1"/>
</dbReference>
<dbReference type="Gene3D" id="2.20.28.10">
    <property type="match status" value="1"/>
</dbReference>
<dbReference type="Gene3D" id="3.40.50.360">
    <property type="match status" value="1"/>
</dbReference>
<dbReference type="Gene3D" id="3.60.15.10">
    <property type="entry name" value="Ribonuclease Z/Hydroxyacylglutathione hydrolase-like"/>
    <property type="match status" value="1"/>
</dbReference>
<dbReference type="HAMAP" id="MF_01312">
    <property type="entry name" value="NorV"/>
    <property type="match status" value="1"/>
</dbReference>
<dbReference type="InterPro" id="IPR023957">
    <property type="entry name" value="Anaer_NO_rdtase_flvorubredoxin"/>
</dbReference>
<dbReference type="InterPro" id="IPR008254">
    <property type="entry name" value="Flavodoxin/NO_synth"/>
</dbReference>
<dbReference type="InterPro" id="IPR029039">
    <property type="entry name" value="Flavoprotein-like_sf"/>
</dbReference>
<dbReference type="InterPro" id="IPR001279">
    <property type="entry name" value="Metallo-B-lactamas"/>
</dbReference>
<dbReference type="InterPro" id="IPR045761">
    <property type="entry name" value="ODP_dom"/>
</dbReference>
<dbReference type="InterPro" id="IPR036866">
    <property type="entry name" value="RibonucZ/Hydroxyglut_hydro"/>
</dbReference>
<dbReference type="InterPro" id="IPR024934">
    <property type="entry name" value="Rubredoxin-like_dom"/>
</dbReference>
<dbReference type="InterPro" id="IPR016440">
    <property type="entry name" value="Rubredoxin-O_OxRdtase"/>
</dbReference>
<dbReference type="InterPro" id="IPR024935">
    <property type="entry name" value="Rubredoxin_dom"/>
</dbReference>
<dbReference type="NCBIfam" id="NF003954">
    <property type="entry name" value="PRK05452.1"/>
    <property type="match status" value="1"/>
</dbReference>
<dbReference type="PANTHER" id="PTHR43717">
    <property type="entry name" value="ANAEROBIC NITRIC OXIDE REDUCTASE FLAVORUBREDOXIN"/>
    <property type="match status" value="1"/>
</dbReference>
<dbReference type="PANTHER" id="PTHR43717:SF1">
    <property type="entry name" value="ANAEROBIC NITRIC OXIDE REDUCTASE FLAVORUBREDOXIN"/>
    <property type="match status" value="1"/>
</dbReference>
<dbReference type="Pfam" id="PF00258">
    <property type="entry name" value="Flavodoxin_1"/>
    <property type="match status" value="1"/>
</dbReference>
<dbReference type="Pfam" id="PF19583">
    <property type="entry name" value="ODP"/>
    <property type="match status" value="1"/>
</dbReference>
<dbReference type="Pfam" id="PF00301">
    <property type="entry name" value="Rubredoxin"/>
    <property type="match status" value="1"/>
</dbReference>
<dbReference type="PIRSF" id="PIRSF005243">
    <property type="entry name" value="ROO"/>
    <property type="match status" value="1"/>
</dbReference>
<dbReference type="PRINTS" id="PR00163">
    <property type="entry name" value="RUBREDOXIN"/>
</dbReference>
<dbReference type="SMART" id="SM00849">
    <property type="entry name" value="Lactamase_B"/>
    <property type="match status" value="1"/>
</dbReference>
<dbReference type="SUPFAM" id="SSF52218">
    <property type="entry name" value="Flavoproteins"/>
    <property type="match status" value="1"/>
</dbReference>
<dbReference type="SUPFAM" id="SSF56281">
    <property type="entry name" value="Metallo-hydrolase/oxidoreductase"/>
    <property type="match status" value="1"/>
</dbReference>
<dbReference type="SUPFAM" id="SSF57802">
    <property type="entry name" value="Rubredoxin-like"/>
    <property type="match status" value="1"/>
</dbReference>
<dbReference type="PROSITE" id="PS50902">
    <property type="entry name" value="FLAVODOXIN_LIKE"/>
    <property type="match status" value="1"/>
</dbReference>
<dbReference type="PROSITE" id="PS50903">
    <property type="entry name" value="RUBREDOXIN_LIKE"/>
    <property type="match status" value="1"/>
</dbReference>
<gene>
    <name type="primary">norV</name>
    <name type="synonym">flrD</name>
    <name type="synonym">ygaI</name>
    <name type="synonym">ygaJ</name>
    <name type="synonym">ygaK</name>
    <name type="ordered locus">b2710</name>
    <name type="ordered locus">JW2680</name>
</gene>
<reference key="1">
    <citation type="submission" date="1994-02" db="EMBL/GenBank/DDBJ databases">
        <title>Sequencing and characterization of the downstream region of hydA in Escherichia coli.</title>
        <authorList>
            <person name="Yano K."/>
            <person name="Ikebukuro K."/>
            <person name="Takada Y."/>
            <person name="Tomiyama M."/>
            <person name="Karube I."/>
        </authorList>
    </citation>
    <scope>NUCLEOTIDE SEQUENCE [GENOMIC DNA]</scope>
    <source>
        <strain>K12</strain>
    </source>
</reference>
<reference key="2">
    <citation type="journal article" date="1997" name="Science">
        <title>The complete genome sequence of Escherichia coli K-12.</title>
        <authorList>
            <person name="Blattner F.R."/>
            <person name="Plunkett G. III"/>
            <person name="Bloch C.A."/>
            <person name="Perna N.T."/>
            <person name="Burland V."/>
            <person name="Riley M."/>
            <person name="Collado-Vides J."/>
            <person name="Glasner J.D."/>
            <person name="Rode C.K."/>
            <person name="Mayhew G.F."/>
            <person name="Gregor J."/>
            <person name="Davis N.W."/>
            <person name="Kirkpatrick H.A."/>
            <person name="Goeden M.A."/>
            <person name="Rose D.J."/>
            <person name="Mau B."/>
            <person name="Shao Y."/>
        </authorList>
    </citation>
    <scope>NUCLEOTIDE SEQUENCE [LARGE SCALE GENOMIC DNA]</scope>
    <source>
        <strain>K12 / MG1655 / ATCC 47076</strain>
    </source>
</reference>
<reference key="3">
    <citation type="journal article" date="2006" name="Mol. Syst. Biol.">
        <title>Highly accurate genome sequences of Escherichia coli K-12 strains MG1655 and W3110.</title>
        <authorList>
            <person name="Hayashi K."/>
            <person name="Morooka N."/>
            <person name="Yamamoto Y."/>
            <person name="Fujita K."/>
            <person name="Isono K."/>
            <person name="Choi S."/>
            <person name="Ohtsubo E."/>
            <person name="Baba T."/>
            <person name="Wanner B.L."/>
            <person name="Mori H."/>
            <person name="Horiuchi T."/>
        </authorList>
    </citation>
    <scope>NUCLEOTIDE SEQUENCE [LARGE SCALE GENOMIC DNA]</scope>
    <source>
        <strain>K12 / W3110 / ATCC 27325 / DSM 5911</strain>
    </source>
</reference>
<reference key="4">
    <citation type="journal article" date="1998" name="Eur. J. Biochem.">
        <title>A family of flavoproteins in the domains Archaea and Bacteria.</title>
        <authorList>
            <person name="Wasserfallen A."/>
            <person name="Ragettli S."/>
            <person name="Jouanneau Y."/>
            <person name="Leisinger T."/>
        </authorList>
    </citation>
    <scope>CHARACTERIZATION</scope>
</reference>
<reference key="5">
    <citation type="journal article" date="2000" name="Biochemistry">
        <title>Spectroscopic studies and characterization of a novel electron-transfer chain from Escherichia coli involving a flavorubredoxin and its flavoprotein reductase partner.</title>
        <authorList>
            <person name="Gomes C.M."/>
            <person name="Vicente J.B."/>
            <person name="Wasserfallen A."/>
            <person name="Teixeira M."/>
        </authorList>
    </citation>
    <scope>PROTEIN SEQUENCE OF N-TERMINUS</scope>
    <scope>CHARACTERIZATION</scope>
    <scope>MUTAGENESIS</scope>
</reference>
<reference key="6">
    <citation type="journal article" date="2002" name="J. Biol. Chem.">
        <title>Flavorubredoxin, an inducible catalyst for nitric oxide reduction and detoxification in Escherichia coli.</title>
        <authorList>
            <person name="Gardner A.M."/>
            <person name="Helmick R.A."/>
            <person name="Gardner P.R."/>
        </authorList>
    </citation>
    <scope>IDENTIFICATION OF FUNCTION</scope>
    <source>
        <strain>K12 / AB1157</strain>
    </source>
</reference>
<reference key="7">
    <citation type="journal article" date="2002" name="J. Biol. Chem.">
        <title>A novel type of nitric-oxide reductase. Escherichia coli flavorubredoxin.</title>
        <authorList>
            <person name="Gomes C.M."/>
            <person name="Giuffre A."/>
            <person name="Forte E."/>
            <person name="Vicente J.B."/>
            <person name="Saraiva L.M."/>
            <person name="Brunori M."/>
            <person name="Teixeira M."/>
        </authorList>
    </citation>
    <scope>IDENTIFICATION OF FUNCTION</scope>
</reference>
<reference key="8">
    <citation type="journal article" date="2003" name="FEMS Microbiol. Lett.">
        <title>Regulation of the flavorubredoxin nitric oxide reductase gene in Escherichia coli: nitrate repression, nitrite induction, and possible post-transcription control.</title>
        <authorList>
            <person name="da Costa P.N."/>
            <person name="Teixeira M."/>
            <person name="Saraiva L.M."/>
        </authorList>
    </citation>
    <scope>REGULATION OF EXPRESSION; NEGATIVE REGULATION BY FNR</scope>
    <source>
        <strain>K12</strain>
    </source>
</reference>
<reference key="9">
    <citation type="journal article" date="2003" name="J. Biol. Chem.">
        <title>Regulation of the nitric oxide reduction operon (norRVW) in Escherichia coli: role of NorR and sigma 54 in the nitric oxide stress response.</title>
        <authorList>
            <person name="Gardner A.M."/>
            <person name="Gessner C.R."/>
            <person name="Gardner P.R."/>
        </authorList>
    </citation>
    <scope>REGULATION OF EXPRESSION; ANAEROBIC AND NO INDUCED EXPRESSION</scope>
    <scope>REQUIREMENT FOR SIGMA-54</scope>
    <source>
        <strain>K12 / AB1157</strain>
    </source>
</reference>
<feature type="chain" id="PRO_0000216785" description="Anaerobic nitric oxide reductase flavorubredoxin">
    <location>
        <begin position="1"/>
        <end position="479"/>
    </location>
</feature>
<feature type="domain" description="Flavodoxin-like">
    <location>
        <begin position="254"/>
        <end position="393"/>
    </location>
</feature>
<feature type="domain" description="Rubredoxin-like">
    <location>
        <begin position="423"/>
        <end position="474"/>
    </location>
</feature>
<feature type="region of interest" description="Zinc metallo-hydrolase">
    <location>
        <begin position="30"/>
        <end position="210"/>
    </location>
</feature>
<feature type="binding site" evidence="1">
    <location>
        <position position="79"/>
    </location>
    <ligand>
        <name>Fe cation</name>
        <dbReference type="ChEBI" id="CHEBI:24875"/>
        <label>1</label>
    </ligand>
</feature>
<feature type="binding site" evidence="1">
    <location>
        <position position="81"/>
    </location>
    <ligand>
        <name>Fe cation</name>
        <dbReference type="ChEBI" id="CHEBI:24875"/>
        <label>1</label>
    </ligand>
</feature>
<feature type="binding site" evidence="1">
    <location>
        <position position="83"/>
    </location>
    <ligand>
        <name>Fe cation</name>
        <dbReference type="ChEBI" id="CHEBI:24875"/>
        <label>2</label>
    </ligand>
</feature>
<feature type="binding site" evidence="1">
    <location>
        <position position="147"/>
    </location>
    <ligand>
        <name>Fe cation</name>
        <dbReference type="ChEBI" id="CHEBI:24875"/>
        <label>1</label>
    </ligand>
</feature>
<feature type="binding site" evidence="1">
    <location>
        <position position="166"/>
    </location>
    <ligand>
        <name>Fe cation</name>
        <dbReference type="ChEBI" id="CHEBI:24875"/>
        <label>1</label>
    </ligand>
</feature>
<feature type="binding site" evidence="1">
    <location>
        <position position="166"/>
    </location>
    <ligand>
        <name>Fe cation</name>
        <dbReference type="ChEBI" id="CHEBI:24875"/>
        <label>2</label>
    </ligand>
</feature>
<feature type="binding site" evidence="1">
    <location>
        <position position="227"/>
    </location>
    <ligand>
        <name>Fe cation</name>
        <dbReference type="ChEBI" id="CHEBI:24875"/>
        <label>2</label>
    </ligand>
</feature>
<feature type="binding site" evidence="1">
    <location>
        <begin position="260"/>
        <end position="264"/>
    </location>
    <ligand>
        <name>FMN</name>
        <dbReference type="ChEBI" id="CHEBI:58210"/>
    </ligand>
</feature>
<feature type="binding site" evidence="1">
    <location>
        <begin position="342"/>
        <end position="369"/>
    </location>
    <ligand>
        <name>FMN</name>
        <dbReference type="ChEBI" id="CHEBI:58210"/>
    </ligand>
</feature>
<feature type="binding site" evidence="1">
    <location>
        <position position="428"/>
    </location>
    <ligand>
        <name>Fe cation</name>
        <dbReference type="ChEBI" id="CHEBI:24875"/>
        <label>3</label>
    </ligand>
</feature>
<feature type="binding site" evidence="1">
    <location>
        <position position="431"/>
    </location>
    <ligand>
        <name>Fe cation</name>
        <dbReference type="ChEBI" id="CHEBI:24875"/>
        <label>3</label>
    </ligand>
</feature>
<feature type="binding site" evidence="1">
    <location>
        <position position="461"/>
    </location>
    <ligand>
        <name>Fe cation</name>
        <dbReference type="ChEBI" id="CHEBI:24875"/>
        <label>3</label>
    </ligand>
</feature>
<feature type="binding site" evidence="1">
    <location>
        <position position="464"/>
    </location>
    <ligand>
        <name>Fe cation</name>
        <dbReference type="ChEBI" id="CHEBI:24875"/>
        <label>3</label>
    </ligand>
</feature>
<feature type="mutagenesis site" description="Unable to accept electrons from nitric oxide reductase FlrD-NAD(+) reductase (norW)." evidence="2">
    <location>
        <begin position="413"/>
        <end position="479"/>
    </location>
</feature>
<feature type="strand" evidence="5">
    <location>
        <begin position="3"/>
        <end position="6"/>
    </location>
</feature>
<feature type="strand" evidence="5">
    <location>
        <begin position="9"/>
        <end position="11"/>
    </location>
</feature>
<feature type="strand" evidence="5">
    <location>
        <begin position="14"/>
        <end position="18"/>
    </location>
</feature>
<feature type="turn" evidence="5">
    <location>
        <begin position="23"/>
        <end position="26"/>
    </location>
</feature>
<feature type="strand" evidence="5">
    <location>
        <begin position="33"/>
        <end position="35"/>
    </location>
</feature>
<feature type="strand" evidence="5">
    <location>
        <begin position="38"/>
        <end position="48"/>
    </location>
</feature>
<feature type="helix" evidence="5">
    <location>
        <begin position="53"/>
        <end position="55"/>
    </location>
</feature>
<feature type="helix" evidence="5">
    <location>
        <begin position="56"/>
        <end position="66"/>
    </location>
</feature>
<feature type="helix" evidence="5">
    <location>
        <begin position="69"/>
        <end position="71"/>
    </location>
</feature>
<feature type="strand" evidence="5">
    <location>
        <begin position="74"/>
        <end position="76"/>
    </location>
</feature>
<feature type="turn" evidence="5">
    <location>
        <begin position="82"/>
        <end position="84"/>
    </location>
</feature>
<feature type="helix" evidence="5">
    <location>
        <begin position="88"/>
        <end position="94"/>
    </location>
</feature>
<feature type="strand" evidence="5">
    <location>
        <begin position="100"/>
        <end position="102"/>
    </location>
</feature>
<feature type="helix" evidence="5">
    <location>
        <begin position="104"/>
        <end position="114"/>
    </location>
</feature>
<feature type="strand" evidence="5">
    <location>
        <begin position="121"/>
        <end position="123"/>
    </location>
</feature>
<feature type="strand" evidence="5">
    <location>
        <begin position="129"/>
        <end position="133"/>
    </location>
</feature>
<feature type="strand" evidence="5">
    <location>
        <begin position="136"/>
        <end position="142"/>
    </location>
</feature>
<feature type="strand" evidence="5">
    <location>
        <begin position="146"/>
        <end position="148"/>
    </location>
</feature>
<feature type="strand" evidence="5">
    <location>
        <begin position="152"/>
        <end position="156"/>
    </location>
</feature>
<feature type="turn" evidence="5">
    <location>
        <begin position="157"/>
        <end position="160"/>
    </location>
</feature>
<feature type="strand" evidence="5">
    <location>
        <begin position="161"/>
        <end position="165"/>
    </location>
</feature>
<feature type="turn" evidence="5">
    <location>
        <begin position="166"/>
        <end position="168"/>
    </location>
</feature>
<feature type="helix" evidence="5">
    <location>
        <begin position="179"/>
        <end position="181"/>
    </location>
</feature>
<feature type="helix" evidence="5">
    <location>
        <begin position="184"/>
        <end position="198"/>
    </location>
</feature>
<feature type="helix" evidence="5">
    <location>
        <begin position="200"/>
        <end position="202"/>
    </location>
</feature>
<feature type="helix" evidence="5">
    <location>
        <begin position="203"/>
        <end position="214"/>
    </location>
</feature>
<feature type="turn" evidence="6">
    <location>
        <begin position="215"/>
        <end position="217"/>
    </location>
</feature>
<feature type="strand" evidence="5">
    <location>
        <begin position="221"/>
        <end position="228"/>
    </location>
</feature>
<feature type="helix" evidence="5">
    <location>
        <begin position="236"/>
        <end position="246"/>
    </location>
</feature>
<feature type="strand" evidence="5">
    <location>
        <begin position="251"/>
        <end position="258"/>
    </location>
</feature>
<feature type="strand" evidence="5">
    <location>
        <begin position="261"/>
        <end position="263"/>
    </location>
</feature>
<feature type="helix" evidence="5">
    <location>
        <begin position="264"/>
        <end position="279"/>
    </location>
</feature>
<feature type="strand" evidence="5">
    <location>
        <begin position="284"/>
        <end position="289"/>
    </location>
</feature>
<feature type="helix" evidence="5">
    <location>
        <begin position="290"/>
        <end position="292"/>
    </location>
</feature>
<feature type="helix" evidence="5">
    <location>
        <begin position="295"/>
        <end position="304"/>
    </location>
</feature>
<feature type="strand" evidence="5">
    <location>
        <begin position="305"/>
        <end position="311"/>
    </location>
</feature>
<feature type="helix" evidence="5">
    <location>
        <begin position="321"/>
        <end position="333"/>
    </location>
</feature>
<feature type="strand" evidence="5">
    <location>
        <begin position="339"/>
        <end position="349"/>
    </location>
</feature>
<feature type="helix" evidence="5">
    <location>
        <begin position="352"/>
        <end position="362"/>
    </location>
</feature>
<feature type="strand" evidence="5">
    <location>
        <begin position="371"/>
        <end position="376"/>
    </location>
</feature>
<feature type="helix" evidence="5">
    <location>
        <begin position="379"/>
        <end position="396"/>
    </location>
</feature>
<feature type="strand" evidence="4">
    <location>
        <begin position="426"/>
        <end position="428"/>
    </location>
</feature>
<feature type="turn" evidence="4">
    <location>
        <begin position="429"/>
        <end position="431"/>
    </location>
</feature>
<feature type="turn" evidence="4">
    <location>
        <begin position="437"/>
        <end position="439"/>
    </location>
</feature>
<feature type="helix" evidence="4">
    <location>
        <begin position="442"/>
        <end position="444"/>
    </location>
</feature>
<feature type="turn" evidence="4">
    <location>
        <begin position="452"/>
        <end position="454"/>
    </location>
</feature>
<feature type="turn" evidence="4">
    <location>
        <begin position="462"/>
        <end position="464"/>
    </location>
</feature>
<feature type="strand" evidence="4">
    <location>
        <begin position="468"/>
        <end position="471"/>
    </location>
</feature>
<proteinExistence type="evidence at protein level"/>
<organism>
    <name type="scientific">Escherichia coli (strain K12)</name>
    <dbReference type="NCBI Taxonomy" id="83333"/>
    <lineage>
        <taxon>Bacteria</taxon>
        <taxon>Pseudomonadati</taxon>
        <taxon>Pseudomonadota</taxon>
        <taxon>Gammaproteobacteria</taxon>
        <taxon>Enterobacterales</taxon>
        <taxon>Enterobacteriaceae</taxon>
        <taxon>Escherichia</taxon>
    </lineage>
</organism>
<comment type="function">
    <text>Anaerobic nitric oxide reductase; uses NADH to detoxify nitric oxide (NO), protecting several 4Fe-4S NO-sensitive enzymes. Has at least 2 reductase partners, only one of which (NorW, flavorubredoxin reductase) has been identified. NO probably binds to the di-iron center; electrons enter from the reductase at rubredoxin and are transferred sequentially to the FMN center and the di-iron center. Also able to function as an aerobic oxygen reductase.</text>
</comment>
<comment type="cofactor">
    <cofactor>
        <name>Fe cation</name>
        <dbReference type="ChEBI" id="CHEBI:24875"/>
    </cofactor>
    <text>Binds 3 Fe cations per monomer.</text>
</comment>
<comment type="cofactor">
    <cofactor>
        <name>FMN</name>
        <dbReference type="ChEBI" id="CHEBI:58210"/>
    </cofactor>
    <text>Binds 1 FMN per monomer.</text>
</comment>
<comment type="pathway">
    <text>Nitrogen metabolism; nitric oxide reduction.</text>
</comment>
<comment type="subunit">
    <text>Homotetramer.</text>
</comment>
<comment type="interaction">
    <interactant intactId="EBI-557904">
        <id>Q46877</id>
    </interactant>
    <interactant intactId="EBI-557904">
        <id>Q46877</id>
        <label>norV</label>
    </interactant>
    <organismsDiffer>false</organismsDiffer>
    <experiments>2</experiments>
</comment>
<comment type="subcellular location">
    <subcellularLocation>
        <location>Cytoplasm</location>
    </subcellularLocation>
</comment>
<comment type="induction">
    <text>Submicromolar concentrations of NO induce NorV-dependent NO consumption; as NO reductase is sensitive to oxygen, no activity is detected in its presence. Repressed by oxygen in the presence of NO. Different effects on anaerobic induction in the absence of NO, and in the presence of N(O)3- or N(O)2- have been reported. Transcription is negatively regulated by FNR and does not require NarL or NarP.</text>
</comment>
<comment type="similarity">
    <text evidence="3">In the N-terminal section; belongs to the zinc metallo-hydrolase group 3 family.</text>
</comment>
<comment type="sequence caution" evidence="3">
    <conflict type="frameshift">
        <sequence resource="EMBL-CDS" id="BAA05933"/>
    </conflict>
</comment>
<accession>Q46877</accession>
<accession>Q2MAB9</accession>
<accession>Q46708</accession>
<accession>Q46709</accession>
<sequence>MSIVVKNNIHWVGQRDWEVRDFHGTEYKTLRGSSYNSYLIREEKNVLIDTVDHKFSREFVQNLRNEIDLADIDYIVINHAEEDHAGALTELMAQIPDTPIYCTANAIDSINGHHHHPEWNFNVVKTGDTLDIGNGKQLIFVETPMLHWPDSMMTYLTGDAVLFSNDAFGQHYCDEHLFNDEVDQTELFEQCQRYYANILTPFSRLVTPKITEILGFNLPVDMIATSHGVVWRDNPTQIVELYLKWAADYQEDRITIFYDTMSNNTRMMADAIAQGIAETDPRVAVKIFNVARSDKNEILTNVFRSKGVLVGTSTMNNVMMPKIAGLVEEMTGLRFRNKRASAFGSHGWSGGAVDRLSTRLQDAGFEMSLSLKAKWRPDQDALKLCREHGREIARQWALAPLPQSTVNTVVKEETSATTTADLGPRMQCSVCQWIYDPAKGEPMQDVAPGTPWSEVPDNFLCPECSLGKDVFEELASEAK</sequence>